<protein>
    <recommendedName>
        <fullName evidence="1">NADH-quinone oxidoreductase subunit I</fullName>
        <ecNumber evidence="1">7.1.1.-</ecNumber>
    </recommendedName>
    <alternativeName>
        <fullName evidence="1">NADH dehydrogenase I subunit I</fullName>
    </alternativeName>
    <alternativeName>
        <fullName evidence="1">NDH-1 subunit I</fullName>
    </alternativeName>
</protein>
<feature type="chain" id="PRO_0000298560" description="NADH-quinone oxidoreductase subunit I">
    <location>
        <begin position="1"/>
        <end position="180"/>
    </location>
</feature>
<feature type="domain" description="4Fe-4S ferredoxin-type 1" evidence="1">
    <location>
        <begin position="50"/>
        <end position="80"/>
    </location>
</feature>
<feature type="domain" description="4Fe-4S ferredoxin-type 2" evidence="1">
    <location>
        <begin position="90"/>
        <end position="119"/>
    </location>
</feature>
<feature type="binding site" evidence="1">
    <location>
        <position position="60"/>
    </location>
    <ligand>
        <name>[4Fe-4S] cluster</name>
        <dbReference type="ChEBI" id="CHEBI:49883"/>
        <label>1</label>
    </ligand>
</feature>
<feature type="binding site" evidence="1">
    <location>
        <position position="63"/>
    </location>
    <ligand>
        <name>[4Fe-4S] cluster</name>
        <dbReference type="ChEBI" id="CHEBI:49883"/>
        <label>1</label>
    </ligand>
</feature>
<feature type="binding site" evidence="1">
    <location>
        <position position="66"/>
    </location>
    <ligand>
        <name>[4Fe-4S] cluster</name>
        <dbReference type="ChEBI" id="CHEBI:49883"/>
        <label>1</label>
    </ligand>
</feature>
<feature type="binding site" evidence="1">
    <location>
        <position position="70"/>
    </location>
    <ligand>
        <name>[4Fe-4S] cluster</name>
        <dbReference type="ChEBI" id="CHEBI:49883"/>
        <label>2</label>
    </ligand>
</feature>
<feature type="binding site" evidence="1">
    <location>
        <position position="99"/>
    </location>
    <ligand>
        <name>[4Fe-4S] cluster</name>
        <dbReference type="ChEBI" id="CHEBI:49883"/>
        <label>2</label>
    </ligand>
</feature>
<feature type="binding site" evidence="1">
    <location>
        <position position="102"/>
    </location>
    <ligand>
        <name>[4Fe-4S] cluster</name>
        <dbReference type="ChEBI" id="CHEBI:49883"/>
        <label>2</label>
    </ligand>
</feature>
<feature type="binding site" evidence="1">
    <location>
        <position position="105"/>
    </location>
    <ligand>
        <name>[4Fe-4S] cluster</name>
        <dbReference type="ChEBI" id="CHEBI:49883"/>
        <label>2</label>
    </ligand>
</feature>
<feature type="binding site" evidence="1">
    <location>
        <position position="109"/>
    </location>
    <ligand>
        <name>[4Fe-4S] cluster</name>
        <dbReference type="ChEBI" id="CHEBI:49883"/>
        <label>1</label>
    </ligand>
</feature>
<accession>A1JLI2</accession>
<sequence length="180" mass="20584">MTLKELVVGFGTQVRSLWMIGLHAFHKRETQMYPEEPVYLPPRYRGRIVLTRDPDGEERCVACNLCAVACPVGCISLQKAEHKDGRWYPEFFRINFSRCIFCGLCEEACPTTAIQLTPDFEMGEFKRQDLVYEKEDLLISGPGKYPEYNFYRMSGMAIDGKLKGEAENEAKPIDVKGLMP</sequence>
<comment type="function">
    <text evidence="1">NDH-1 shuttles electrons from NADH, via FMN and iron-sulfur (Fe-S) centers, to quinones in the respiratory chain. The immediate electron acceptor for the enzyme in this species is believed to be ubiquinone. Couples the redox reaction to proton translocation (for every two electrons transferred, four hydrogen ions are translocated across the cytoplasmic membrane), and thus conserves the redox energy in a proton gradient.</text>
</comment>
<comment type="catalytic activity">
    <reaction evidence="1">
        <text>a quinone + NADH + 5 H(+)(in) = a quinol + NAD(+) + 4 H(+)(out)</text>
        <dbReference type="Rhea" id="RHEA:57888"/>
        <dbReference type="ChEBI" id="CHEBI:15378"/>
        <dbReference type="ChEBI" id="CHEBI:24646"/>
        <dbReference type="ChEBI" id="CHEBI:57540"/>
        <dbReference type="ChEBI" id="CHEBI:57945"/>
        <dbReference type="ChEBI" id="CHEBI:132124"/>
    </reaction>
</comment>
<comment type="cofactor">
    <cofactor evidence="1">
        <name>[4Fe-4S] cluster</name>
        <dbReference type="ChEBI" id="CHEBI:49883"/>
    </cofactor>
    <text evidence="1">Binds 2 [4Fe-4S] clusters per subunit.</text>
</comment>
<comment type="subunit">
    <text evidence="1">NDH-1 is composed of 13 different subunits. Subunits NuoA, H, J, K, L, M, N constitute the membrane sector of the complex.</text>
</comment>
<comment type="subcellular location">
    <subcellularLocation>
        <location evidence="1">Cell inner membrane</location>
        <topology evidence="1">Peripheral membrane protein</topology>
    </subcellularLocation>
</comment>
<comment type="similarity">
    <text evidence="1">Belongs to the complex I 23 kDa subunit family.</text>
</comment>
<reference key="1">
    <citation type="journal article" date="2006" name="PLoS Genet.">
        <title>The complete genome sequence and comparative genome analysis of the high pathogenicity Yersinia enterocolitica strain 8081.</title>
        <authorList>
            <person name="Thomson N.R."/>
            <person name="Howard S."/>
            <person name="Wren B.W."/>
            <person name="Holden M.T.G."/>
            <person name="Crossman L."/>
            <person name="Challis G.L."/>
            <person name="Churcher C."/>
            <person name="Mungall K."/>
            <person name="Brooks K."/>
            <person name="Chillingworth T."/>
            <person name="Feltwell T."/>
            <person name="Abdellah Z."/>
            <person name="Hauser H."/>
            <person name="Jagels K."/>
            <person name="Maddison M."/>
            <person name="Moule S."/>
            <person name="Sanders M."/>
            <person name="Whitehead S."/>
            <person name="Quail M.A."/>
            <person name="Dougan G."/>
            <person name="Parkhill J."/>
            <person name="Prentice M.B."/>
        </authorList>
    </citation>
    <scope>NUCLEOTIDE SEQUENCE [LARGE SCALE GENOMIC DNA]</scope>
    <source>
        <strain>NCTC 13174 / 8081</strain>
    </source>
</reference>
<organism>
    <name type="scientific">Yersinia enterocolitica serotype O:8 / biotype 1B (strain NCTC 13174 / 8081)</name>
    <dbReference type="NCBI Taxonomy" id="393305"/>
    <lineage>
        <taxon>Bacteria</taxon>
        <taxon>Pseudomonadati</taxon>
        <taxon>Pseudomonadota</taxon>
        <taxon>Gammaproteobacteria</taxon>
        <taxon>Enterobacterales</taxon>
        <taxon>Yersiniaceae</taxon>
        <taxon>Yersinia</taxon>
    </lineage>
</organism>
<evidence type="ECO:0000255" key="1">
    <source>
        <dbReference type="HAMAP-Rule" id="MF_01351"/>
    </source>
</evidence>
<dbReference type="EC" id="7.1.1.-" evidence="1"/>
<dbReference type="EMBL" id="AM286415">
    <property type="protein sequence ID" value="CAL11439.1"/>
    <property type="molecule type" value="Genomic_DNA"/>
</dbReference>
<dbReference type="RefSeq" id="WP_011815942.1">
    <property type="nucleotide sequence ID" value="NC_008800.1"/>
</dbReference>
<dbReference type="RefSeq" id="YP_001005667.1">
    <property type="nucleotide sequence ID" value="NC_008800.1"/>
</dbReference>
<dbReference type="SMR" id="A1JLI2"/>
<dbReference type="KEGG" id="yen:YE1351"/>
<dbReference type="PATRIC" id="fig|393305.7.peg.1470"/>
<dbReference type="eggNOG" id="COG1143">
    <property type="taxonomic scope" value="Bacteria"/>
</dbReference>
<dbReference type="HOGENOM" id="CLU_067218_4_3_6"/>
<dbReference type="OrthoDB" id="9808559at2"/>
<dbReference type="Proteomes" id="UP000000642">
    <property type="component" value="Chromosome"/>
</dbReference>
<dbReference type="GO" id="GO:0005886">
    <property type="term" value="C:plasma membrane"/>
    <property type="evidence" value="ECO:0007669"/>
    <property type="project" value="UniProtKB-SubCell"/>
</dbReference>
<dbReference type="GO" id="GO:0051539">
    <property type="term" value="F:4 iron, 4 sulfur cluster binding"/>
    <property type="evidence" value="ECO:0007669"/>
    <property type="project" value="UniProtKB-KW"/>
</dbReference>
<dbReference type="GO" id="GO:0005506">
    <property type="term" value="F:iron ion binding"/>
    <property type="evidence" value="ECO:0007669"/>
    <property type="project" value="UniProtKB-UniRule"/>
</dbReference>
<dbReference type="GO" id="GO:0050136">
    <property type="term" value="F:NADH:ubiquinone reductase (non-electrogenic) activity"/>
    <property type="evidence" value="ECO:0007669"/>
    <property type="project" value="UniProtKB-UniRule"/>
</dbReference>
<dbReference type="GO" id="GO:0048038">
    <property type="term" value="F:quinone binding"/>
    <property type="evidence" value="ECO:0007669"/>
    <property type="project" value="UniProtKB-KW"/>
</dbReference>
<dbReference type="GO" id="GO:0009060">
    <property type="term" value="P:aerobic respiration"/>
    <property type="evidence" value="ECO:0007669"/>
    <property type="project" value="TreeGrafter"/>
</dbReference>
<dbReference type="FunFam" id="3.30.70.3270:FF:000002">
    <property type="entry name" value="NADH-quinone oxidoreductase subunit I"/>
    <property type="match status" value="1"/>
</dbReference>
<dbReference type="Gene3D" id="3.30.70.3270">
    <property type="match status" value="1"/>
</dbReference>
<dbReference type="HAMAP" id="MF_01351">
    <property type="entry name" value="NDH1_NuoI"/>
    <property type="match status" value="1"/>
</dbReference>
<dbReference type="InterPro" id="IPR017896">
    <property type="entry name" value="4Fe4S_Fe-S-bd"/>
</dbReference>
<dbReference type="InterPro" id="IPR017900">
    <property type="entry name" value="4Fe4S_Fe_S_CS"/>
</dbReference>
<dbReference type="InterPro" id="IPR010226">
    <property type="entry name" value="NADH_quinone_OxRdtase_chainI"/>
</dbReference>
<dbReference type="NCBIfam" id="TIGR01971">
    <property type="entry name" value="NuoI"/>
    <property type="match status" value="1"/>
</dbReference>
<dbReference type="NCBIfam" id="NF004536">
    <property type="entry name" value="PRK05888.1-1"/>
    <property type="match status" value="1"/>
</dbReference>
<dbReference type="PANTHER" id="PTHR10849:SF20">
    <property type="entry name" value="NADH DEHYDROGENASE [UBIQUINONE] IRON-SULFUR PROTEIN 8, MITOCHONDRIAL"/>
    <property type="match status" value="1"/>
</dbReference>
<dbReference type="PANTHER" id="PTHR10849">
    <property type="entry name" value="NADH DEHYDROGENASE UBIQUINONE IRON-SULFUR PROTEIN 8, MITOCHONDRIAL"/>
    <property type="match status" value="1"/>
</dbReference>
<dbReference type="Pfam" id="PF12838">
    <property type="entry name" value="Fer4_7"/>
    <property type="match status" value="1"/>
</dbReference>
<dbReference type="SUPFAM" id="SSF54862">
    <property type="entry name" value="4Fe-4S ferredoxins"/>
    <property type="match status" value="1"/>
</dbReference>
<dbReference type="PROSITE" id="PS00198">
    <property type="entry name" value="4FE4S_FER_1"/>
    <property type="match status" value="2"/>
</dbReference>
<dbReference type="PROSITE" id="PS51379">
    <property type="entry name" value="4FE4S_FER_2"/>
    <property type="match status" value="2"/>
</dbReference>
<name>NUOI_YERE8</name>
<keyword id="KW-0004">4Fe-4S</keyword>
<keyword id="KW-0997">Cell inner membrane</keyword>
<keyword id="KW-1003">Cell membrane</keyword>
<keyword id="KW-0408">Iron</keyword>
<keyword id="KW-0411">Iron-sulfur</keyword>
<keyword id="KW-0472">Membrane</keyword>
<keyword id="KW-0479">Metal-binding</keyword>
<keyword id="KW-0520">NAD</keyword>
<keyword id="KW-0874">Quinone</keyword>
<keyword id="KW-0677">Repeat</keyword>
<keyword id="KW-1278">Translocase</keyword>
<keyword id="KW-0830">Ubiquinone</keyword>
<proteinExistence type="inferred from homology"/>
<gene>
    <name evidence="1" type="primary">nuoI</name>
    <name type="ordered locus">YE1351</name>
</gene>